<dbReference type="EC" id="7.6.2.-" evidence="1"/>
<dbReference type="EMBL" id="AE006468">
    <property type="protein sequence ID" value="AAL20147.1"/>
    <property type="molecule type" value="Genomic_DNA"/>
</dbReference>
<dbReference type="RefSeq" id="WP_001033714.1">
    <property type="nucleotide sequence ID" value="NC_003197.2"/>
</dbReference>
<dbReference type="SMR" id="P61482"/>
<dbReference type="STRING" id="99287.STM1218"/>
<dbReference type="PaxDb" id="99287-STM1218"/>
<dbReference type="KEGG" id="stm:STM1218"/>
<dbReference type="PATRIC" id="fig|99287.12.peg.1287"/>
<dbReference type="HOGENOM" id="CLU_000604_1_22_6"/>
<dbReference type="OMA" id="DHHTAQG"/>
<dbReference type="PhylomeDB" id="P61482"/>
<dbReference type="BioCyc" id="SENT99287:STM1218-MONOMER"/>
<dbReference type="Proteomes" id="UP000001014">
    <property type="component" value="Chromosome"/>
</dbReference>
<dbReference type="GO" id="GO:0005886">
    <property type="term" value="C:plasma membrane"/>
    <property type="evidence" value="ECO:0000318"/>
    <property type="project" value="GO_Central"/>
</dbReference>
<dbReference type="GO" id="GO:0005524">
    <property type="term" value="F:ATP binding"/>
    <property type="evidence" value="ECO:0007669"/>
    <property type="project" value="UniProtKB-KW"/>
</dbReference>
<dbReference type="GO" id="GO:0016887">
    <property type="term" value="F:ATP hydrolysis activity"/>
    <property type="evidence" value="ECO:0007669"/>
    <property type="project" value="InterPro"/>
</dbReference>
<dbReference type="GO" id="GO:0022857">
    <property type="term" value="F:transmembrane transporter activity"/>
    <property type="evidence" value="ECO:0000318"/>
    <property type="project" value="GO_Central"/>
</dbReference>
<dbReference type="GO" id="GO:0044874">
    <property type="term" value="P:lipoprotein localization to outer membrane"/>
    <property type="evidence" value="ECO:0000318"/>
    <property type="project" value="GO_Central"/>
</dbReference>
<dbReference type="GO" id="GO:0089705">
    <property type="term" value="P:protein localization to outer membrane"/>
    <property type="evidence" value="ECO:0000318"/>
    <property type="project" value="GO_Central"/>
</dbReference>
<dbReference type="GO" id="GO:0055085">
    <property type="term" value="P:transmembrane transport"/>
    <property type="evidence" value="ECO:0000318"/>
    <property type="project" value="GO_Central"/>
</dbReference>
<dbReference type="CDD" id="cd03255">
    <property type="entry name" value="ABC_MJ0796_LolCDE_FtsE"/>
    <property type="match status" value="1"/>
</dbReference>
<dbReference type="FunFam" id="3.40.50.300:FF:000230">
    <property type="entry name" value="Lipoprotein-releasing system ATP-binding protein LolD"/>
    <property type="match status" value="1"/>
</dbReference>
<dbReference type="Gene3D" id="3.40.50.300">
    <property type="entry name" value="P-loop containing nucleotide triphosphate hydrolases"/>
    <property type="match status" value="1"/>
</dbReference>
<dbReference type="InterPro" id="IPR003593">
    <property type="entry name" value="AAA+_ATPase"/>
</dbReference>
<dbReference type="InterPro" id="IPR003439">
    <property type="entry name" value="ABC_transporter-like_ATP-bd"/>
</dbReference>
<dbReference type="InterPro" id="IPR017871">
    <property type="entry name" value="ABC_transporter-like_CS"/>
</dbReference>
<dbReference type="InterPro" id="IPR015854">
    <property type="entry name" value="ABC_transpr_LolD-like"/>
</dbReference>
<dbReference type="InterPro" id="IPR011924">
    <property type="entry name" value="LolD_lipo_ATP-bd"/>
</dbReference>
<dbReference type="InterPro" id="IPR017911">
    <property type="entry name" value="MacB-like_ATP-bd"/>
</dbReference>
<dbReference type="InterPro" id="IPR027417">
    <property type="entry name" value="P-loop_NTPase"/>
</dbReference>
<dbReference type="NCBIfam" id="TIGR02211">
    <property type="entry name" value="LolD_lipo_ex"/>
    <property type="match status" value="1"/>
</dbReference>
<dbReference type="NCBIfam" id="NF008639">
    <property type="entry name" value="PRK11629.1"/>
    <property type="match status" value="1"/>
</dbReference>
<dbReference type="PANTHER" id="PTHR24220">
    <property type="entry name" value="IMPORT ATP-BINDING PROTEIN"/>
    <property type="match status" value="1"/>
</dbReference>
<dbReference type="PANTHER" id="PTHR24220:SF689">
    <property type="entry name" value="LIPOPROTEIN-RELEASING SYSTEM ATP-BINDING PROTEIN LOLD"/>
    <property type="match status" value="1"/>
</dbReference>
<dbReference type="Pfam" id="PF00005">
    <property type="entry name" value="ABC_tran"/>
    <property type="match status" value="1"/>
</dbReference>
<dbReference type="SMART" id="SM00382">
    <property type="entry name" value="AAA"/>
    <property type="match status" value="1"/>
</dbReference>
<dbReference type="SUPFAM" id="SSF52540">
    <property type="entry name" value="P-loop containing nucleoside triphosphate hydrolases"/>
    <property type="match status" value="1"/>
</dbReference>
<dbReference type="PROSITE" id="PS00211">
    <property type="entry name" value="ABC_TRANSPORTER_1"/>
    <property type="match status" value="1"/>
</dbReference>
<dbReference type="PROSITE" id="PS50893">
    <property type="entry name" value="ABC_TRANSPORTER_2"/>
    <property type="match status" value="1"/>
</dbReference>
<dbReference type="PROSITE" id="PS51244">
    <property type="entry name" value="LOLD"/>
    <property type="match status" value="1"/>
</dbReference>
<gene>
    <name evidence="1" type="primary">lolD</name>
    <name type="ordered locus">STM1218</name>
</gene>
<organism>
    <name type="scientific">Salmonella typhimurium (strain LT2 / SGSC1412 / ATCC 700720)</name>
    <dbReference type="NCBI Taxonomy" id="99287"/>
    <lineage>
        <taxon>Bacteria</taxon>
        <taxon>Pseudomonadati</taxon>
        <taxon>Pseudomonadota</taxon>
        <taxon>Gammaproteobacteria</taxon>
        <taxon>Enterobacterales</taxon>
        <taxon>Enterobacteriaceae</taxon>
        <taxon>Salmonella</taxon>
    </lineage>
</organism>
<accession>P61482</accession>
<accession>Q8XGH3</accession>
<evidence type="ECO:0000255" key="1">
    <source>
        <dbReference type="HAMAP-Rule" id="MF_01708"/>
    </source>
</evidence>
<keyword id="KW-0067">ATP-binding</keyword>
<keyword id="KW-0997">Cell inner membrane</keyword>
<keyword id="KW-1003">Cell membrane</keyword>
<keyword id="KW-0472">Membrane</keyword>
<keyword id="KW-0547">Nucleotide-binding</keyword>
<keyword id="KW-1185">Reference proteome</keyword>
<keyword id="KW-1278">Translocase</keyword>
<keyword id="KW-0813">Transport</keyword>
<protein>
    <recommendedName>
        <fullName evidence="1">Lipoprotein-releasing system ATP-binding protein LolD</fullName>
        <ecNumber evidence="1">7.6.2.-</ecNumber>
    </recommendedName>
</protein>
<comment type="function">
    <text evidence="1">Part of the ABC transporter complex LolCDE involved in the translocation of mature outer membrane-directed lipoproteins, from the inner membrane to the periplasmic chaperone, LolA. Responsible for the formation of the LolA-lipoprotein complex in an ATP-dependent manner.</text>
</comment>
<comment type="subunit">
    <text evidence="1">The complex is composed of two ATP-binding proteins (LolD) and two transmembrane proteins (LolC and LolE).</text>
</comment>
<comment type="subcellular location">
    <subcellularLocation>
        <location evidence="1">Cell inner membrane</location>
        <topology evidence="1">Peripheral membrane protein</topology>
    </subcellularLocation>
</comment>
<comment type="similarity">
    <text evidence="1">Belongs to the ABC transporter superfamily. Lipoprotein translocase (TC 3.A.1.125) family.</text>
</comment>
<sequence length="233" mass="25479">MNKILLQCDNLCKRYQEGTVQTDVLHDVSFSIGEGEMMAIVGSSGSGKSTLLHLLGGLDTPTSGDVIFSGQPMSKLSSAAKAELRNQKLGFIYQFHHLLPDFTALENVAMPLLIGKKKPAEIDARAREMLHAVGLEHRATHRPSELSGGERQRVAIARALVNNPRLVLADEPTGNLDARNADSIFELLGELNRLQGTAFLVVTHDLQLAKRMSRQLEMRDGRLTAELSLMGAE</sequence>
<feature type="chain" id="PRO_0000092459" description="Lipoprotein-releasing system ATP-binding protein LolD">
    <location>
        <begin position="1"/>
        <end position="233"/>
    </location>
</feature>
<feature type="domain" description="ABC transporter" evidence="1">
    <location>
        <begin position="6"/>
        <end position="233"/>
    </location>
</feature>
<feature type="binding site" evidence="1">
    <location>
        <begin position="42"/>
        <end position="49"/>
    </location>
    <ligand>
        <name>ATP</name>
        <dbReference type="ChEBI" id="CHEBI:30616"/>
    </ligand>
</feature>
<reference key="1">
    <citation type="journal article" date="2001" name="Nature">
        <title>Complete genome sequence of Salmonella enterica serovar Typhimurium LT2.</title>
        <authorList>
            <person name="McClelland M."/>
            <person name="Sanderson K.E."/>
            <person name="Spieth J."/>
            <person name="Clifton S.W."/>
            <person name="Latreille P."/>
            <person name="Courtney L."/>
            <person name="Porwollik S."/>
            <person name="Ali J."/>
            <person name="Dante M."/>
            <person name="Du F."/>
            <person name="Hou S."/>
            <person name="Layman D."/>
            <person name="Leonard S."/>
            <person name="Nguyen C."/>
            <person name="Scott K."/>
            <person name="Holmes A."/>
            <person name="Grewal N."/>
            <person name="Mulvaney E."/>
            <person name="Ryan E."/>
            <person name="Sun H."/>
            <person name="Florea L."/>
            <person name="Miller W."/>
            <person name="Stoneking T."/>
            <person name="Nhan M."/>
            <person name="Waterston R."/>
            <person name="Wilson R.K."/>
        </authorList>
    </citation>
    <scope>NUCLEOTIDE SEQUENCE [LARGE SCALE GENOMIC DNA]</scope>
    <source>
        <strain>LT2 / SGSC1412 / ATCC 700720</strain>
    </source>
</reference>
<name>LOLD_SALTY</name>
<proteinExistence type="inferred from homology"/>